<keyword id="KW-0067">ATP-binding</keyword>
<keyword id="KW-0143">Chaperone</keyword>
<keyword id="KW-0547">Nucleotide-binding</keyword>
<proteinExistence type="inferred from homology"/>
<organism>
    <name type="scientific">Pseudomonas savastanoi pv. phaseolicola (strain 1448A / Race 6)</name>
    <name type="common">Pseudomonas syringae pv. phaseolicola (strain 1448A / Race 6)</name>
    <dbReference type="NCBI Taxonomy" id="264730"/>
    <lineage>
        <taxon>Bacteria</taxon>
        <taxon>Pseudomonadati</taxon>
        <taxon>Pseudomonadota</taxon>
        <taxon>Gammaproteobacteria</taxon>
        <taxon>Pseudomonadales</taxon>
        <taxon>Pseudomonadaceae</taxon>
        <taxon>Pseudomonas</taxon>
    </lineage>
</organism>
<name>HSCA_PSE14</name>
<gene>
    <name evidence="1" type="primary">hscA</name>
    <name type="ordered locus">PSPPH_1313</name>
</gene>
<protein>
    <recommendedName>
        <fullName evidence="1">Chaperone protein HscA homolog</fullName>
    </recommendedName>
</protein>
<feature type="chain" id="PRO_1000044867" description="Chaperone protein HscA homolog">
    <location>
        <begin position="1"/>
        <end position="620"/>
    </location>
</feature>
<accession>Q48M01</accession>
<evidence type="ECO:0000255" key="1">
    <source>
        <dbReference type="HAMAP-Rule" id="MF_00679"/>
    </source>
</evidence>
<reference key="1">
    <citation type="journal article" date="2005" name="J. Bacteriol.">
        <title>Whole-genome sequence analysis of Pseudomonas syringae pv. phaseolicola 1448A reveals divergence among pathovars in genes involved in virulence and transposition.</title>
        <authorList>
            <person name="Joardar V."/>
            <person name="Lindeberg M."/>
            <person name="Jackson R.W."/>
            <person name="Selengut J."/>
            <person name="Dodson R."/>
            <person name="Brinkac L.M."/>
            <person name="Daugherty S.C."/>
            <person name="DeBoy R.T."/>
            <person name="Durkin A.S."/>
            <person name="Gwinn Giglio M."/>
            <person name="Madupu R."/>
            <person name="Nelson W.C."/>
            <person name="Rosovitz M.J."/>
            <person name="Sullivan S.A."/>
            <person name="Crabtree J."/>
            <person name="Creasy T."/>
            <person name="Davidsen T.M."/>
            <person name="Haft D.H."/>
            <person name="Zafar N."/>
            <person name="Zhou L."/>
            <person name="Halpin R."/>
            <person name="Holley T."/>
            <person name="Khouri H.M."/>
            <person name="Feldblyum T.V."/>
            <person name="White O."/>
            <person name="Fraser C.M."/>
            <person name="Chatterjee A.K."/>
            <person name="Cartinhour S."/>
            <person name="Schneider D."/>
            <person name="Mansfield J.W."/>
            <person name="Collmer A."/>
            <person name="Buell R."/>
        </authorList>
    </citation>
    <scope>NUCLEOTIDE SEQUENCE [LARGE SCALE GENOMIC DNA]</scope>
    <source>
        <strain>1448A / Race 6</strain>
    </source>
</reference>
<dbReference type="EMBL" id="CP000058">
    <property type="protein sequence ID" value="AAZ35634.1"/>
    <property type="molecule type" value="Genomic_DNA"/>
</dbReference>
<dbReference type="RefSeq" id="WP_011167999.1">
    <property type="nucleotide sequence ID" value="NC_005773.3"/>
</dbReference>
<dbReference type="SMR" id="Q48M01"/>
<dbReference type="KEGG" id="psp:PSPPH_1313"/>
<dbReference type="eggNOG" id="COG0443">
    <property type="taxonomic scope" value="Bacteria"/>
</dbReference>
<dbReference type="HOGENOM" id="CLU_005965_2_3_6"/>
<dbReference type="Proteomes" id="UP000000551">
    <property type="component" value="Chromosome"/>
</dbReference>
<dbReference type="GO" id="GO:0005524">
    <property type="term" value="F:ATP binding"/>
    <property type="evidence" value="ECO:0007669"/>
    <property type="project" value="UniProtKB-KW"/>
</dbReference>
<dbReference type="GO" id="GO:0016887">
    <property type="term" value="F:ATP hydrolysis activity"/>
    <property type="evidence" value="ECO:0007669"/>
    <property type="project" value="UniProtKB-UniRule"/>
</dbReference>
<dbReference type="GO" id="GO:0140662">
    <property type="term" value="F:ATP-dependent protein folding chaperone"/>
    <property type="evidence" value="ECO:0007669"/>
    <property type="project" value="InterPro"/>
</dbReference>
<dbReference type="GO" id="GO:0051082">
    <property type="term" value="F:unfolded protein binding"/>
    <property type="evidence" value="ECO:0007669"/>
    <property type="project" value="InterPro"/>
</dbReference>
<dbReference type="GO" id="GO:0016226">
    <property type="term" value="P:iron-sulfur cluster assembly"/>
    <property type="evidence" value="ECO:0007669"/>
    <property type="project" value="InterPro"/>
</dbReference>
<dbReference type="CDD" id="cd10236">
    <property type="entry name" value="ASKHA_NBD_HSP70_HscA"/>
    <property type="match status" value="1"/>
</dbReference>
<dbReference type="FunFam" id="3.30.420.40:FF:000046">
    <property type="entry name" value="Chaperone protein HscA"/>
    <property type="match status" value="1"/>
</dbReference>
<dbReference type="FunFam" id="2.60.34.10:FF:000005">
    <property type="entry name" value="Chaperone protein HscA homolog"/>
    <property type="match status" value="1"/>
</dbReference>
<dbReference type="Gene3D" id="1.20.1270.10">
    <property type="match status" value="1"/>
</dbReference>
<dbReference type="Gene3D" id="3.30.420.40">
    <property type="match status" value="2"/>
</dbReference>
<dbReference type="Gene3D" id="3.90.640.10">
    <property type="entry name" value="Actin, Chain A, domain 4"/>
    <property type="match status" value="1"/>
</dbReference>
<dbReference type="Gene3D" id="2.60.34.10">
    <property type="entry name" value="Substrate Binding Domain Of DNAk, Chain A, domain 1"/>
    <property type="match status" value="1"/>
</dbReference>
<dbReference type="HAMAP" id="MF_00679">
    <property type="entry name" value="HscA"/>
    <property type="match status" value="1"/>
</dbReference>
<dbReference type="InterPro" id="IPR043129">
    <property type="entry name" value="ATPase_NBD"/>
</dbReference>
<dbReference type="InterPro" id="IPR018181">
    <property type="entry name" value="Heat_shock_70_CS"/>
</dbReference>
<dbReference type="InterPro" id="IPR042039">
    <property type="entry name" value="HscA_NBD"/>
</dbReference>
<dbReference type="InterPro" id="IPR029048">
    <property type="entry name" value="HSP70_C_sf"/>
</dbReference>
<dbReference type="InterPro" id="IPR029047">
    <property type="entry name" value="HSP70_peptide-bd_sf"/>
</dbReference>
<dbReference type="InterPro" id="IPR013126">
    <property type="entry name" value="Hsp_70_fam"/>
</dbReference>
<dbReference type="InterPro" id="IPR010236">
    <property type="entry name" value="ISC_FeS_clus_asmbl_HscA"/>
</dbReference>
<dbReference type="NCBIfam" id="TIGR01991">
    <property type="entry name" value="HscA"/>
    <property type="match status" value="1"/>
</dbReference>
<dbReference type="NCBIfam" id="NF003520">
    <property type="entry name" value="PRK05183.1"/>
    <property type="match status" value="1"/>
</dbReference>
<dbReference type="PANTHER" id="PTHR19375">
    <property type="entry name" value="HEAT SHOCK PROTEIN 70KDA"/>
    <property type="match status" value="1"/>
</dbReference>
<dbReference type="Pfam" id="PF00012">
    <property type="entry name" value="HSP70"/>
    <property type="match status" value="1"/>
</dbReference>
<dbReference type="PRINTS" id="PR00301">
    <property type="entry name" value="HEATSHOCK70"/>
</dbReference>
<dbReference type="SUPFAM" id="SSF53067">
    <property type="entry name" value="Actin-like ATPase domain"/>
    <property type="match status" value="2"/>
</dbReference>
<dbReference type="SUPFAM" id="SSF100934">
    <property type="entry name" value="Heat shock protein 70kD (HSP70), C-terminal subdomain"/>
    <property type="match status" value="1"/>
</dbReference>
<dbReference type="SUPFAM" id="SSF100920">
    <property type="entry name" value="Heat shock protein 70kD (HSP70), peptide-binding domain"/>
    <property type="match status" value="1"/>
</dbReference>
<dbReference type="PROSITE" id="PS00297">
    <property type="entry name" value="HSP70_1"/>
    <property type="match status" value="1"/>
</dbReference>
<dbReference type="PROSITE" id="PS00329">
    <property type="entry name" value="HSP70_2"/>
    <property type="match status" value="1"/>
</dbReference>
<dbReference type="PROSITE" id="PS01036">
    <property type="entry name" value="HSP70_3"/>
    <property type="match status" value="2"/>
</dbReference>
<comment type="function">
    <text evidence="1">Chaperone involved in the maturation of iron-sulfur cluster-containing proteins. Has a low intrinsic ATPase activity which is markedly stimulated by HscB.</text>
</comment>
<comment type="similarity">
    <text evidence="1">Belongs to the heat shock protein 70 family.</text>
</comment>
<sequence>MALLQIAEPGLSPQPHQRRLAVGIDLGTTNSLVAAVRSGLSEPLADAEGQVILPSAVRYHADRVEVGQSAKIAASQDPFNTVLSVKRLMGRGLTDVKQLGEQLPYRFVGGESHMPFIDTVQGPKSPVEVSADILKVLRERAESTLGGELVGAVITVPAYFDDSQRQATKDAARLAGLNVLRLLNEPTAAAVAYGLDQKAEGVVAIYDLGGGTFDISILRLTGGVFEVLATGGDTALGGDDFDHAIANWIVTDAALSADIDPSAQRSLLQAACSAKEALTDAESVEVAYGDWRGTLTREALNALIEPMVARSLKACRRAVRDTGIELEEVEAVVMVGGSTRVPRVREAVAELFGRQPLTQIDPDQVVAIGAAIQADTLAGNKRDGGELLLLDVIPLSLGLETMGGLMEKVIPRNTTIPVARGQEFTTYKDGQTAMKIHVLQGERELISDCRSLARFELRGIPPMVAGAAKIRVTFQVDADGLLSVSAREMGSGIESSIQVKPSYGLTDDEVTRMLKDSFEYAGDDKVARVLREHQVDAERLLEAVQGALEADGERLLDEEERLVINLQMDELRELMQGTDGYAIEQQTKRLSQVTDAFAARRLDSTVKAALAGRNLNEIEE</sequence>